<keyword id="KW-0066">ATP synthesis</keyword>
<keyword id="KW-0997">Cell inner membrane</keyword>
<keyword id="KW-1003">Cell membrane</keyword>
<keyword id="KW-0139">CF(1)</keyword>
<keyword id="KW-0375">Hydrogen ion transport</keyword>
<keyword id="KW-0406">Ion transport</keyword>
<keyword id="KW-0472">Membrane</keyword>
<keyword id="KW-0813">Transport</keyword>
<organism>
    <name type="scientific">Xanthomonas oryzae pv. oryzae (strain MAFF 311018)</name>
    <dbReference type="NCBI Taxonomy" id="342109"/>
    <lineage>
        <taxon>Bacteria</taxon>
        <taxon>Pseudomonadati</taxon>
        <taxon>Pseudomonadota</taxon>
        <taxon>Gammaproteobacteria</taxon>
        <taxon>Lysobacterales</taxon>
        <taxon>Lysobacteraceae</taxon>
        <taxon>Xanthomonas</taxon>
    </lineage>
</organism>
<accession>Q2P7Q3</accession>
<proteinExistence type="inferred from homology"/>
<evidence type="ECO:0000255" key="1">
    <source>
        <dbReference type="HAMAP-Rule" id="MF_00530"/>
    </source>
</evidence>
<feature type="chain" id="PRO_0000265927" description="ATP synthase epsilon chain">
    <location>
        <begin position="1"/>
        <end position="140"/>
    </location>
</feature>
<protein>
    <recommendedName>
        <fullName evidence="1">ATP synthase epsilon chain</fullName>
    </recommendedName>
    <alternativeName>
        <fullName evidence="1">ATP synthase F1 sector epsilon subunit</fullName>
    </alternativeName>
    <alternativeName>
        <fullName evidence="1">F-ATPase epsilon subunit</fullName>
    </alternativeName>
</protein>
<name>ATPE_XANOM</name>
<reference key="1">
    <citation type="journal article" date="2005" name="Jpn. Agric. Res. Q.">
        <title>Genome sequence of Xanthomonas oryzae pv. oryzae suggests contribution of large numbers of effector genes and insertion sequences to its race diversity.</title>
        <authorList>
            <person name="Ochiai H."/>
            <person name="Inoue Y."/>
            <person name="Takeya M."/>
            <person name="Sasaki A."/>
            <person name="Kaku H."/>
        </authorList>
    </citation>
    <scope>NUCLEOTIDE SEQUENCE [LARGE SCALE GENOMIC DNA]</scope>
    <source>
        <strain>MAFF 311018</strain>
    </source>
</reference>
<sequence length="140" mass="15234">MSTIRCDIVSAEKEIFHGEATLVVATGELGELGIAPKHAPLITRLKPGKVVVTTANGEHLDFAISGGILEVQPQVVTILVDTAVRAQDIEEAAVRKVKEEAERLLANRGNTVDVAEAQRRLTEATVQLQALERLRRNLKH</sequence>
<gene>
    <name evidence="1" type="primary">atpC</name>
    <name type="ordered locus">XOO0669</name>
</gene>
<comment type="function">
    <text evidence="1">Produces ATP from ADP in the presence of a proton gradient across the membrane.</text>
</comment>
<comment type="subunit">
    <text>F-type ATPases have 2 components, CF(1) - the catalytic core - and CF(0) - the membrane proton channel. CF(1) has five subunits: alpha(3), beta(3), gamma(1), delta(1), epsilon(1). CF(0) has three main subunits: a, b and c.</text>
</comment>
<comment type="subcellular location">
    <subcellularLocation>
        <location evidence="1">Cell inner membrane</location>
        <topology evidence="1">Peripheral membrane protein</topology>
    </subcellularLocation>
</comment>
<comment type="similarity">
    <text evidence="1">Belongs to the ATPase epsilon chain family.</text>
</comment>
<dbReference type="EMBL" id="AP008229">
    <property type="protein sequence ID" value="BAE67424.1"/>
    <property type="molecule type" value="Genomic_DNA"/>
</dbReference>
<dbReference type="RefSeq" id="WP_011407577.1">
    <property type="nucleotide sequence ID" value="NC_007705.1"/>
</dbReference>
<dbReference type="SMR" id="Q2P7Q3"/>
<dbReference type="KEGG" id="xom:XOO0669"/>
<dbReference type="HOGENOM" id="CLU_084338_2_0_6"/>
<dbReference type="GO" id="GO:0005886">
    <property type="term" value="C:plasma membrane"/>
    <property type="evidence" value="ECO:0007669"/>
    <property type="project" value="UniProtKB-SubCell"/>
</dbReference>
<dbReference type="GO" id="GO:0045259">
    <property type="term" value="C:proton-transporting ATP synthase complex"/>
    <property type="evidence" value="ECO:0007669"/>
    <property type="project" value="UniProtKB-KW"/>
</dbReference>
<dbReference type="GO" id="GO:0005524">
    <property type="term" value="F:ATP binding"/>
    <property type="evidence" value="ECO:0007669"/>
    <property type="project" value="UniProtKB-UniRule"/>
</dbReference>
<dbReference type="GO" id="GO:0046933">
    <property type="term" value="F:proton-transporting ATP synthase activity, rotational mechanism"/>
    <property type="evidence" value="ECO:0007669"/>
    <property type="project" value="UniProtKB-UniRule"/>
</dbReference>
<dbReference type="CDD" id="cd12152">
    <property type="entry name" value="F1-ATPase_delta"/>
    <property type="match status" value="1"/>
</dbReference>
<dbReference type="FunFam" id="2.60.15.10:FF:000001">
    <property type="entry name" value="ATP synthase epsilon chain"/>
    <property type="match status" value="1"/>
</dbReference>
<dbReference type="Gene3D" id="1.20.5.440">
    <property type="entry name" value="ATP synthase delta/epsilon subunit, C-terminal domain"/>
    <property type="match status" value="1"/>
</dbReference>
<dbReference type="Gene3D" id="2.60.15.10">
    <property type="entry name" value="F0F1 ATP synthase delta/epsilon subunit, N-terminal"/>
    <property type="match status" value="1"/>
</dbReference>
<dbReference type="HAMAP" id="MF_00530">
    <property type="entry name" value="ATP_synth_epsil_bac"/>
    <property type="match status" value="1"/>
</dbReference>
<dbReference type="InterPro" id="IPR036794">
    <property type="entry name" value="ATP_F1_dsu/esu_C_sf"/>
</dbReference>
<dbReference type="InterPro" id="IPR001469">
    <property type="entry name" value="ATP_synth_F1_dsu/esu"/>
</dbReference>
<dbReference type="InterPro" id="IPR020546">
    <property type="entry name" value="ATP_synth_F1_dsu/esu_N"/>
</dbReference>
<dbReference type="InterPro" id="IPR020547">
    <property type="entry name" value="ATP_synth_F1_esu_C"/>
</dbReference>
<dbReference type="InterPro" id="IPR036771">
    <property type="entry name" value="ATPsynth_dsu/esu_N"/>
</dbReference>
<dbReference type="NCBIfam" id="TIGR01216">
    <property type="entry name" value="ATP_synt_epsi"/>
    <property type="match status" value="1"/>
</dbReference>
<dbReference type="NCBIfam" id="NF001847">
    <property type="entry name" value="PRK00571.1-4"/>
    <property type="match status" value="1"/>
</dbReference>
<dbReference type="PANTHER" id="PTHR13822">
    <property type="entry name" value="ATP SYNTHASE DELTA/EPSILON CHAIN"/>
    <property type="match status" value="1"/>
</dbReference>
<dbReference type="PANTHER" id="PTHR13822:SF10">
    <property type="entry name" value="ATP SYNTHASE EPSILON CHAIN, CHLOROPLASTIC"/>
    <property type="match status" value="1"/>
</dbReference>
<dbReference type="Pfam" id="PF00401">
    <property type="entry name" value="ATP-synt_DE"/>
    <property type="match status" value="1"/>
</dbReference>
<dbReference type="Pfam" id="PF02823">
    <property type="entry name" value="ATP-synt_DE_N"/>
    <property type="match status" value="1"/>
</dbReference>
<dbReference type="SUPFAM" id="SSF46604">
    <property type="entry name" value="Epsilon subunit of F1F0-ATP synthase C-terminal domain"/>
    <property type="match status" value="1"/>
</dbReference>
<dbReference type="SUPFAM" id="SSF51344">
    <property type="entry name" value="Epsilon subunit of F1F0-ATP synthase N-terminal domain"/>
    <property type="match status" value="1"/>
</dbReference>